<accession>A2T3M4</accession>
<proteinExistence type="evidence at protein level"/>
<evidence type="ECO:0000255" key="1">
    <source>
        <dbReference type="HAMAP-Rule" id="MF_04088"/>
    </source>
</evidence>
<protein>
    <recommendedName>
        <fullName evidence="1">Non-structural protein 1</fullName>
        <shortName evidence="1">NSP1</shortName>
    </recommendedName>
    <alternativeName>
        <fullName evidence="1">NCVP2</fullName>
    </alternativeName>
    <alternativeName>
        <fullName evidence="1">Non-structural RNA-binding protein 53</fullName>
        <shortName evidence="1">NS53</shortName>
    </alternativeName>
</protein>
<organism>
    <name type="scientific">Rotavirus A (isolate RVA/Monkey/South Africa/SA11-H96/1958/G3P5B[2])</name>
    <name type="common">RV-A</name>
    <name type="synonym">Simian Agent 11 (isolate SI/South Africa/H96/58)</name>
    <dbReference type="NCBI Taxonomy" id="450149"/>
    <lineage>
        <taxon>Viruses</taxon>
        <taxon>Riboviria</taxon>
        <taxon>Orthornavirae</taxon>
        <taxon>Duplornaviricota</taxon>
        <taxon>Resentoviricetes</taxon>
        <taxon>Reovirales</taxon>
        <taxon>Sedoreoviridae</taxon>
        <taxon>Rotavirus</taxon>
        <taxon>Rotavirus A</taxon>
    </lineage>
</organism>
<sequence>MATFKDACFHYRRLTALNRRLCNIGANSICMPVPDAKIKGWCLECCQIADLTHCYGCSLPHVCKWCVQNRRCFLDNEPHLLKLRTVKHPITKDKLQCIIDLYNIIFPINDKVIRKFERMIKQRKCRNQYKIEWYNHLLLPITLNAAAFKFDENNLYYVFGLYEKSVSDIYAPYRIVNFINEFDKLLLDDINFTRMSNLPIELRNHYAKKYFQLSRLPSSKLKQIYFSDFTKETVIFNTYTKTPGRSIYRNVTEFNWRDELELYSDLKNDKNKLIAAMMTSKYTRFYAHDNNFGRLKMTIFELGHHCQPNYVASNHPGNASDIQYCKWCNIKYFLSKIDWRIRDMYNLLMEFIKDCYKSNVNVGHCSSVENIYPLIKRLIWSLFTNHMDQTIEEVFNHMSPVSVEGTNVIMLILGLNISLYNEIKRTLNVDSIPMVLNLNEFSSIVKSISSKWYNVDELDKLPMSIKSTEELIEMKNSGTLTEEFELLISNSEDDNE</sequence>
<feature type="chain" id="PRO_0000367821" description="Non-structural protein 1">
    <location>
        <begin position="1"/>
        <end position="496"/>
    </location>
</feature>
<feature type="region of interest" description="RNA-binding" evidence="1">
    <location>
        <begin position="1"/>
        <end position="81"/>
    </location>
</feature>
<feature type="region of interest" description="Zinc-binding domain" evidence="1">
    <location>
        <begin position="42"/>
        <end position="79"/>
    </location>
</feature>
<feature type="region of interest" description="Important for cytoskeleton localization" evidence="1">
    <location>
        <begin position="82"/>
        <end position="177"/>
    </location>
</feature>
<feature type="region of interest" description="Interaction with host IRF3" evidence="1">
    <location>
        <begin position="321"/>
        <end position="496"/>
    </location>
</feature>
<feature type="short sequence motif" description="pLxIS motif" evidence="1">
    <location>
        <begin position="486"/>
        <end position="489"/>
    </location>
</feature>
<dbReference type="EMBL" id="DQ838599">
    <property type="protein sequence ID" value="ABG75773.1"/>
    <property type="molecule type" value="Genomic_RNA"/>
</dbReference>
<dbReference type="RefSeq" id="YP_002302219.1">
    <property type="nucleotide sequence ID" value="NC_011500.2"/>
</dbReference>
<dbReference type="SMR" id="A2T3M4"/>
<dbReference type="IntAct" id="A2T3M4">
    <property type="interactions" value="2"/>
</dbReference>
<dbReference type="GeneID" id="7011353"/>
<dbReference type="KEGG" id="vg:7011353"/>
<dbReference type="Proteomes" id="UP000001119">
    <property type="component" value="Genome"/>
</dbReference>
<dbReference type="GO" id="GO:0030430">
    <property type="term" value="C:host cell cytoplasm"/>
    <property type="evidence" value="ECO:0007669"/>
    <property type="project" value="UniProtKB-UniRule"/>
</dbReference>
<dbReference type="GO" id="GO:0044163">
    <property type="term" value="C:host cytoskeleton"/>
    <property type="evidence" value="ECO:0007669"/>
    <property type="project" value="UniProtKB-SubCell"/>
</dbReference>
<dbReference type="GO" id="GO:0046872">
    <property type="term" value="F:metal ion binding"/>
    <property type="evidence" value="ECO:0007669"/>
    <property type="project" value="UniProtKB-UniRule"/>
</dbReference>
<dbReference type="GO" id="GO:0003723">
    <property type="term" value="F:RNA binding"/>
    <property type="evidence" value="ECO:0007669"/>
    <property type="project" value="UniProtKB-UniRule"/>
</dbReference>
<dbReference type="GO" id="GO:0039548">
    <property type="term" value="P:symbiont-mediated suppression of host cytoplasmic pattern recognition receptor signaling pathway via inhibition of IRF3 activity"/>
    <property type="evidence" value="ECO:0007669"/>
    <property type="project" value="UniProtKB-UniRule"/>
</dbReference>
<dbReference type="GO" id="GO:0039557">
    <property type="term" value="P:symbiont-mediated suppression of host cytoplasmic pattern recognition receptor signaling pathway via inhibition of IRF7 activity"/>
    <property type="evidence" value="ECO:0007669"/>
    <property type="project" value="UniProtKB-UniRule"/>
</dbReference>
<dbReference type="HAMAP" id="MF_04088">
    <property type="entry name" value="ROTA_NSP1"/>
    <property type="match status" value="1"/>
</dbReference>
<dbReference type="InterPro" id="IPR002148">
    <property type="entry name" value="Rotavirus_NSP1"/>
</dbReference>
<dbReference type="Pfam" id="PF00981">
    <property type="entry name" value="Rota_NS53"/>
    <property type="match status" value="1"/>
</dbReference>
<keyword id="KW-1035">Host cytoplasm</keyword>
<keyword id="KW-1037">Host cytoskeleton</keyword>
<keyword id="KW-0945">Host-virus interaction</keyword>
<keyword id="KW-1090">Inhibition of host innate immune response by virus</keyword>
<keyword id="KW-1092">Inhibition of host IRF3 by virus</keyword>
<keyword id="KW-1093">Inhibition of host IRF7 by virus</keyword>
<keyword id="KW-1113">Inhibition of host RLR pathway by virus</keyword>
<keyword id="KW-0922">Interferon antiviral system evasion</keyword>
<keyword id="KW-0479">Metal-binding</keyword>
<keyword id="KW-1185">Reference proteome</keyword>
<keyword id="KW-0694">RNA-binding</keyword>
<keyword id="KW-0899">Viral immunoevasion</keyword>
<name>NSP1_ROTSH</name>
<comment type="function">
    <text evidence="1">Plays a role in the inhibition of host innate immunity by inducing the degradation of key host factors required to activate interferon production such as IRF3, IRF5 or IRF7. Associates with components of cullin RING ligases (CRLs) including CUL1 or CUL3, which are essential multisubunit ubiquitination complexes, to modulate their activities.</text>
</comment>
<comment type="subunit">
    <text evidence="1">Interacts (via C-terminus) with host IRF3; this interaction leads to IRF3 degradation. Interacts with host IRF7; this interaction leads to IRF7 degradation. Interacts with host CUL1 and CUL3.</text>
</comment>
<comment type="interaction">
    <interactant intactId="EBI-9522123">
        <id>A2T3M4</id>
    </interactant>
    <interactant intactId="EBI-995373">
        <id>Q7Z434</id>
        <label>MAVS</label>
    </interactant>
    <organismsDiffer>true</organismsDiffer>
    <experiments>4</experiments>
</comment>
<comment type="interaction">
    <interactant intactId="EBI-9522123">
        <id>A2T3M4</id>
    </interactant>
    <interactant intactId="EBI-10816181">
        <id>P13481</id>
        <label>TP53</label>
    </interactant>
    <organismsDiffer>true</organismsDiffer>
    <experiments>2</experiments>
</comment>
<comment type="subcellular location">
    <subcellularLocation>
        <location evidence="1">Host cytoplasm</location>
        <location evidence="1">Host cytoskeleton</location>
    </subcellularLocation>
</comment>
<comment type="domain">
    <text evidence="1">The integrity of the zinc-binding domain in NSP1 is important for degradation of host IRF3.</text>
</comment>
<comment type="domain">
    <text evidence="1">The pLxIS motif targets host IRF3 for degradation; however phosphorylation of NSP1 pLxIS motif is not required for its activity.</text>
</comment>
<comment type="similarity">
    <text evidence="1">Belongs to the rotavirus NSP1 family.</text>
</comment>
<reference key="1">
    <citation type="journal article" date="2007" name="Virology">
        <title>Genome heterogeneity of SA11 rotavirus due to reassortment with 'O' agent.</title>
        <authorList>
            <person name="Small C."/>
            <person name="Barro M."/>
            <person name="Brown T.L."/>
            <person name="Patton J.T."/>
        </authorList>
    </citation>
    <scope>NUCLEOTIDE SEQUENCE [GENOMIC RNA]</scope>
</reference>
<organismHost>
    <name type="scientific">Chlorocebus pygerythrus</name>
    <name type="common">Vervet monkey</name>
    <name type="synonym">Cercopithecus pygerythrus</name>
    <dbReference type="NCBI Taxonomy" id="60710"/>
</organismHost>